<feature type="chain" id="PRO_0000419411" description="Protein PA-X">
    <location>
        <begin position="1"/>
        <end position="252"/>
    </location>
</feature>
<feature type="active site" evidence="2">
    <location>
        <position position="80"/>
    </location>
</feature>
<feature type="active site" evidence="2">
    <location>
        <position position="108"/>
    </location>
</feature>
<feature type="site" description="Important for efficient shutoff activity and nuclear localization" evidence="4">
    <location>
        <position position="195"/>
    </location>
</feature>
<feature type="site" description="Important for efficient shutoff activity and nuclear localization" evidence="4">
    <location>
        <position position="198"/>
    </location>
</feature>
<feature type="site" description="Important for efficient shutoff activity and nuclear localization" evidence="4">
    <location>
        <position position="199"/>
    </location>
</feature>
<feature type="site" description="Important for efficient shutoff activity" evidence="3">
    <location>
        <position position="202"/>
    </location>
</feature>
<feature type="site" description="Important for efficient shutoff activity" evidence="3">
    <location>
        <position position="203"/>
    </location>
</feature>
<feature type="site" description="Important for efficient shutoff activity" evidence="3">
    <location>
        <position position="206"/>
    </location>
</feature>
<reference key="1">
    <citation type="journal article" date="1989" name="Virology">
        <title>Evolutionary pathways of the PA genes of influenza A viruses.</title>
        <authorList>
            <person name="Okazaki K."/>
            <person name="Kawaoka Y."/>
            <person name="Webster R.G."/>
        </authorList>
    </citation>
    <scope>NUCLEOTIDE SEQUENCE [GENOMIC RNA]</scope>
</reference>
<accession>P0DJU8</accession>
<evidence type="ECO:0000250" key="1">
    <source>
        <dbReference type="UniProtKB" id="P0CK64"/>
    </source>
</evidence>
<evidence type="ECO:0000250" key="2">
    <source>
        <dbReference type="UniProtKB" id="P0CK68"/>
    </source>
</evidence>
<evidence type="ECO:0000250" key="3">
    <source>
        <dbReference type="UniProtKB" id="P0DJW8"/>
    </source>
</evidence>
<evidence type="ECO:0000250" key="4">
    <source>
        <dbReference type="UniProtKB" id="P0DXO5"/>
    </source>
</evidence>
<evidence type="ECO:0000305" key="5"/>
<sequence>MEDFVRQCFNPMIVELAEKAMKEYGENPKIETNKFAAICTHLEVCFMYSDFHFIDERGESIIVESGDPNALLKHRFEIIEGRDRTMAWTVVNSICNTTGVEKPKFLPDLYDYKENRFIEIGVTRREVHIYYLEKANKIKSEKTHIHIFSFTGEEMATKADYTLDEESRARIKTRLFTIRQEMASRGLWDSFVSPREAKRQLKKDLKSQEPCAGLPTKVSHRTSPALKTLEPMWMDSNRTAALRASFLKCQKK</sequence>
<keyword id="KW-1132">Decay of host mRNAs by virus</keyword>
<keyword id="KW-1262">Eukaryotic host gene expression shutoff by virus</keyword>
<keyword id="KW-1035">Host cytoplasm</keyword>
<keyword id="KW-1190">Host gene expression shutoff by virus</keyword>
<keyword id="KW-1192">Host mRNA suppression by virus</keyword>
<keyword id="KW-1048">Host nucleus</keyword>
<keyword id="KW-0945">Host-virus interaction</keyword>
<keyword id="KW-0688">Ribosomal frameshifting</keyword>
<gene>
    <name type="primary">PA</name>
</gene>
<name>PAX_I82A4</name>
<protein>
    <recommendedName>
        <fullName>Protein PA-X</fullName>
    </recommendedName>
</protein>
<comment type="function">
    <text evidence="1 4">Plays a major role in the shutoff of the host protein expression by cleaving mRNAs probably via an endonuclease activity. This host shutoff allows the virus to escape from the host antiviral response (By similarity). Hijacks host RNA splicing machinery to selectively target host RNAs containing introns for destruction. This may explain the preferential degradation of RNAs that have undergone co- or post-transcriptional processing (By similarity).</text>
</comment>
<comment type="subcellular location">
    <subcellularLocation>
        <location evidence="4">Host cytoplasm</location>
    </subcellularLocation>
    <subcellularLocation>
        <location evidence="4">Host nucleus</location>
    </subcellularLocation>
</comment>
<comment type="alternative products">
    <event type="ribosomal frameshifting"/>
    <isoform>
        <id>P0DJU8-1</id>
        <name>PA-X</name>
        <sequence type="displayed"/>
    </isoform>
    <isoform>
        <id>P13174-1</id>
        <name>PA</name>
        <sequence type="external"/>
    </isoform>
</comment>
<comment type="domain">
    <text evidence="1 4">The probable endonuclease active site in the N-terminus and the basic amino acid cluster in the C-terminus are important for the shutoff activity. The C-terminus acts as a nuclear localization signal (By similarity). The C-terminus is recruited to host protein complexes involved in nuclear Pol II RNA processing (By similarity).</text>
</comment>
<comment type="similarity">
    <text evidence="5">Belongs to the influenza viruses PA-X family.</text>
</comment>
<organismHost>
    <name type="scientific">Aves</name>
    <dbReference type="NCBI Taxonomy" id="8782"/>
</organismHost>
<organismHost>
    <name type="scientific">Cetacea</name>
    <name type="common">whales</name>
    <dbReference type="NCBI Taxonomy" id="9721"/>
</organismHost>
<organismHost>
    <name type="scientific">Homo sapiens</name>
    <name type="common">Human</name>
    <dbReference type="NCBI Taxonomy" id="9606"/>
</organismHost>
<organismHost>
    <name type="scientific">Phocidae</name>
    <name type="common">true seals</name>
    <dbReference type="NCBI Taxonomy" id="9709"/>
</organismHost>
<organismHost>
    <name type="scientific">Sus scrofa</name>
    <name type="common">Pig</name>
    <dbReference type="NCBI Taxonomy" id="9823"/>
</organismHost>
<dbReference type="EMBL" id="M26081">
    <property type="status" value="NOT_ANNOTATED_CDS"/>
    <property type="molecule type" value="Genomic_RNA"/>
</dbReference>
<dbReference type="SMR" id="P0DJU8"/>
<dbReference type="IntAct" id="P0DJU8">
    <property type="interactions" value="1"/>
</dbReference>
<dbReference type="GO" id="GO:0003723">
    <property type="term" value="F:RNA binding"/>
    <property type="evidence" value="ECO:0007669"/>
    <property type="project" value="InterPro"/>
</dbReference>
<dbReference type="GO" id="GO:0039694">
    <property type="term" value="P:viral RNA genome replication"/>
    <property type="evidence" value="ECO:0007669"/>
    <property type="project" value="InterPro"/>
</dbReference>
<dbReference type="GO" id="GO:0075523">
    <property type="term" value="P:viral translational frameshifting"/>
    <property type="evidence" value="ECO:0007669"/>
    <property type="project" value="UniProtKB-KW"/>
</dbReference>
<dbReference type="FunFam" id="3.40.91.90:FF:000001">
    <property type="entry name" value="Polymerase acidic protein"/>
    <property type="match status" value="1"/>
</dbReference>
<dbReference type="Gene3D" id="3.40.91.90">
    <property type="entry name" value="Influenza RNA-dependent RNA polymerase subunit PA, endonuclease domain"/>
    <property type="match status" value="1"/>
</dbReference>
<dbReference type="InterPro" id="IPR001009">
    <property type="entry name" value="PA/PA-X"/>
</dbReference>
<dbReference type="InterPro" id="IPR038372">
    <property type="entry name" value="PA/PA-X_sf"/>
</dbReference>
<dbReference type="Pfam" id="PF00603">
    <property type="entry name" value="Flu_PA"/>
    <property type="match status" value="1"/>
</dbReference>
<proteinExistence type="inferred from homology"/>
<organism>
    <name type="scientific">Influenza A virus (strain A/Swine/Hong Kong/126/1982 H3N2)</name>
    <dbReference type="NCBI Taxonomy" id="382848"/>
    <lineage>
        <taxon>Viruses</taxon>
        <taxon>Riboviria</taxon>
        <taxon>Orthornavirae</taxon>
        <taxon>Negarnaviricota</taxon>
        <taxon>Polyploviricotina</taxon>
        <taxon>Insthoviricetes</taxon>
        <taxon>Articulavirales</taxon>
        <taxon>Orthomyxoviridae</taxon>
        <taxon>Alphainfluenzavirus</taxon>
        <taxon>Alphainfluenzavirus influenzae</taxon>
        <taxon>Influenza A virus</taxon>
    </lineage>
</organism>